<feature type="initiator methionine" description="Removed" evidence="1">
    <location>
        <position position="1"/>
    </location>
</feature>
<feature type="chain" id="PRO_0000216720" description="Alkanesulfonate monooxygenase">
    <location>
        <begin position="2"/>
        <end position="381"/>
    </location>
</feature>
<proteinExistence type="inferred from homology"/>
<gene>
    <name evidence="2" type="primary">ssuD</name>
    <name type="ordered locus">SF0934</name>
    <name type="ordered locus">S0999</name>
</gene>
<dbReference type="EC" id="1.14.14.5" evidence="2"/>
<dbReference type="EMBL" id="AE005674">
    <property type="protein sequence ID" value="AAN42563.1"/>
    <property type="molecule type" value="Genomic_DNA"/>
</dbReference>
<dbReference type="EMBL" id="AE014073">
    <property type="protein sequence ID" value="AAP16448.1"/>
    <property type="molecule type" value="Genomic_DNA"/>
</dbReference>
<dbReference type="RefSeq" id="WP_000055999.1">
    <property type="nucleotide sequence ID" value="NZ_WPGW01000240.1"/>
</dbReference>
<dbReference type="SMR" id="P59189"/>
<dbReference type="STRING" id="198214.SF0934"/>
<dbReference type="PaxDb" id="198214-SF0934"/>
<dbReference type="KEGG" id="sfl:SF0934"/>
<dbReference type="KEGG" id="sfx:S0999"/>
<dbReference type="PATRIC" id="fig|198214.7.peg.1088"/>
<dbReference type="HOGENOM" id="CLU_027853_1_0_6"/>
<dbReference type="Proteomes" id="UP000001006">
    <property type="component" value="Chromosome"/>
</dbReference>
<dbReference type="Proteomes" id="UP000002673">
    <property type="component" value="Chromosome"/>
</dbReference>
<dbReference type="GO" id="GO:0008726">
    <property type="term" value="F:alkanesulfonate monooxygenase activity"/>
    <property type="evidence" value="ECO:0007669"/>
    <property type="project" value="UniProtKB-UniRule"/>
</dbReference>
<dbReference type="GO" id="GO:0046306">
    <property type="term" value="P:alkanesulfonate catabolic process"/>
    <property type="evidence" value="ECO:0007669"/>
    <property type="project" value="TreeGrafter"/>
</dbReference>
<dbReference type="CDD" id="cd01094">
    <property type="entry name" value="Alkanesulfonate_monoxygenase"/>
    <property type="match status" value="1"/>
</dbReference>
<dbReference type="FunFam" id="3.20.20.30:FF:000001">
    <property type="entry name" value="Alkanesulfonate monooxygenase"/>
    <property type="match status" value="1"/>
</dbReference>
<dbReference type="Gene3D" id="3.20.20.30">
    <property type="entry name" value="Luciferase-like domain"/>
    <property type="match status" value="1"/>
</dbReference>
<dbReference type="HAMAP" id="MF_01229">
    <property type="entry name" value="Alkanesulf_monooxygen"/>
    <property type="match status" value="1"/>
</dbReference>
<dbReference type="InterPro" id="IPR019911">
    <property type="entry name" value="Alkanesulphonate_mOase_FMN-dep"/>
</dbReference>
<dbReference type="InterPro" id="IPR011251">
    <property type="entry name" value="Luciferase-like_dom"/>
</dbReference>
<dbReference type="InterPro" id="IPR036661">
    <property type="entry name" value="Luciferase-like_sf"/>
</dbReference>
<dbReference type="InterPro" id="IPR050172">
    <property type="entry name" value="SsuD_RutA_monooxygenase"/>
</dbReference>
<dbReference type="NCBIfam" id="TIGR03565">
    <property type="entry name" value="alk_sulf_monoox"/>
    <property type="match status" value="1"/>
</dbReference>
<dbReference type="NCBIfam" id="NF001939">
    <property type="entry name" value="PRK00719.1"/>
    <property type="match status" value="1"/>
</dbReference>
<dbReference type="PANTHER" id="PTHR42847">
    <property type="entry name" value="ALKANESULFONATE MONOOXYGENASE"/>
    <property type="match status" value="1"/>
</dbReference>
<dbReference type="PANTHER" id="PTHR42847:SF4">
    <property type="entry name" value="ALKANESULFONATE MONOOXYGENASE-RELATED"/>
    <property type="match status" value="1"/>
</dbReference>
<dbReference type="Pfam" id="PF00296">
    <property type="entry name" value="Bac_luciferase"/>
    <property type="match status" value="1"/>
</dbReference>
<dbReference type="SUPFAM" id="SSF51679">
    <property type="entry name" value="Bacterial luciferase-like"/>
    <property type="match status" value="1"/>
</dbReference>
<organism>
    <name type="scientific">Shigella flexneri</name>
    <dbReference type="NCBI Taxonomy" id="623"/>
    <lineage>
        <taxon>Bacteria</taxon>
        <taxon>Pseudomonadati</taxon>
        <taxon>Pseudomonadota</taxon>
        <taxon>Gammaproteobacteria</taxon>
        <taxon>Enterobacterales</taxon>
        <taxon>Enterobacteriaceae</taxon>
        <taxon>Shigella</taxon>
    </lineage>
</organism>
<sequence length="381" mass="41697">MSLNMFWFLPTHGDGHYLGTEEGSRPVDHGYLQQIAQAADRLGYTGVLIPTGRSCEDAWLVAASMIPVTQRLKFLVALRPSVTSPTVAARQAATLDRLSNGRALFNLVTGSDPQELAGDGVFLDHSERYEASAEFTQVWRRLLLGETVNFNGKHIHVRGAKLLFPPIQQPYPPLYFGGSSDVAQELAAEQVDLYLTWGEPPELVKEKIEQVRAKAAAYGRKIRFGIRLHVIVRETNDEAWQAAERLISHLDDETIAKAQAAFARTDSVGQQRMAALHNGKRDNLEISPNLWAGVGLVRGGAGTALVGDGPTVAARINEYAALGIDSFVLSGYPHLEEAYRVGELLFPHLDVAIPEIPQPQPLNPQGEAVANDFIPRKVAQS</sequence>
<name>SSUD_SHIFL</name>
<accession>P59189</accession>
<reference key="1">
    <citation type="journal article" date="2002" name="Nucleic Acids Res.">
        <title>Genome sequence of Shigella flexneri 2a: insights into pathogenicity through comparison with genomes of Escherichia coli K12 and O157.</title>
        <authorList>
            <person name="Jin Q."/>
            <person name="Yuan Z."/>
            <person name="Xu J."/>
            <person name="Wang Y."/>
            <person name="Shen Y."/>
            <person name="Lu W."/>
            <person name="Wang J."/>
            <person name="Liu H."/>
            <person name="Yang J."/>
            <person name="Yang F."/>
            <person name="Zhang X."/>
            <person name="Zhang J."/>
            <person name="Yang G."/>
            <person name="Wu H."/>
            <person name="Qu D."/>
            <person name="Dong J."/>
            <person name="Sun L."/>
            <person name="Xue Y."/>
            <person name="Zhao A."/>
            <person name="Gao Y."/>
            <person name="Zhu J."/>
            <person name="Kan B."/>
            <person name="Ding K."/>
            <person name="Chen S."/>
            <person name="Cheng H."/>
            <person name="Yao Z."/>
            <person name="He B."/>
            <person name="Chen R."/>
            <person name="Ma D."/>
            <person name="Qiang B."/>
            <person name="Wen Y."/>
            <person name="Hou Y."/>
            <person name="Yu J."/>
        </authorList>
    </citation>
    <scope>NUCLEOTIDE SEQUENCE [LARGE SCALE GENOMIC DNA]</scope>
    <source>
        <strain>301 / Serotype 2a</strain>
    </source>
</reference>
<reference key="2">
    <citation type="journal article" date="2003" name="Infect. Immun.">
        <title>Complete genome sequence and comparative genomics of Shigella flexneri serotype 2a strain 2457T.</title>
        <authorList>
            <person name="Wei J."/>
            <person name="Goldberg M.B."/>
            <person name="Burland V."/>
            <person name="Venkatesan M.M."/>
            <person name="Deng W."/>
            <person name="Fournier G."/>
            <person name="Mayhew G.F."/>
            <person name="Plunkett G. III"/>
            <person name="Rose D.J."/>
            <person name="Darling A."/>
            <person name="Mau B."/>
            <person name="Perna N.T."/>
            <person name="Payne S.M."/>
            <person name="Runyen-Janecky L.J."/>
            <person name="Zhou S."/>
            <person name="Schwartz D.C."/>
            <person name="Blattner F.R."/>
        </authorList>
    </citation>
    <scope>NUCLEOTIDE SEQUENCE [LARGE SCALE GENOMIC DNA]</scope>
    <source>
        <strain>ATCC 700930 / 2457T / Serotype 2a</strain>
    </source>
</reference>
<protein>
    <recommendedName>
        <fullName evidence="2">Alkanesulfonate monooxygenase</fullName>
        <ecNumber evidence="2">1.14.14.5</ecNumber>
    </recommendedName>
    <alternativeName>
        <fullName evidence="2">FMNH2-dependent aliphatic sulfonate monooxygenase</fullName>
    </alternativeName>
</protein>
<comment type="function">
    <text evidence="2">Catalyzes the desulfonation of aliphatic sulfonates.</text>
</comment>
<comment type="catalytic activity">
    <reaction evidence="2">
        <text>an alkanesulfonate + FMNH2 + O2 = an aldehyde + FMN + sulfite + H2O + 2 H(+)</text>
        <dbReference type="Rhea" id="RHEA:23064"/>
        <dbReference type="ChEBI" id="CHEBI:15377"/>
        <dbReference type="ChEBI" id="CHEBI:15378"/>
        <dbReference type="ChEBI" id="CHEBI:15379"/>
        <dbReference type="ChEBI" id="CHEBI:17359"/>
        <dbReference type="ChEBI" id="CHEBI:17478"/>
        <dbReference type="ChEBI" id="CHEBI:57618"/>
        <dbReference type="ChEBI" id="CHEBI:58210"/>
        <dbReference type="ChEBI" id="CHEBI:134249"/>
        <dbReference type="EC" id="1.14.14.5"/>
    </reaction>
</comment>
<comment type="subunit">
    <text evidence="2">Homotetramer.</text>
</comment>
<comment type="miscellaneous">
    <text evidence="2">FMNH(2) which is absolutely required for this enzymatic reaction, is provided by SsuE.</text>
</comment>
<comment type="similarity">
    <text evidence="2">Belongs to the SsuD family.</text>
</comment>
<keyword id="KW-0285">Flavoprotein</keyword>
<keyword id="KW-0288">FMN</keyword>
<keyword id="KW-0503">Monooxygenase</keyword>
<keyword id="KW-0560">Oxidoreductase</keyword>
<keyword id="KW-1185">Reference proteome</keyword>
<evidence type="ECO:0000250" key="1"/>
<evidence type="ECO:0000255" key="2">
    <source>
        <dbReference type="HAMAP-Rule" id="MF_01229"/>
    </source>
</evidence>